<reference key="1">
    <citation type="journal article" date="1998" name="Cell">
        <title>GBP, an inhibitor of GSK-3, is implicated in Xenopus development and oncogenesis.</title>
        <authorList>
            <person name="Yost C."/>
            <person name="Farr G.H. III"/>
            <person name="Pierce S.B."/>
            <person name="Ferkey D.M."/>
            <person name="Chen M.M."/>
            <person name="Kimelman D."/>
        </authorList>
    </citation>
    <scope>NUCLEOTIDE SEQUENCE [MRNA]</scope>
    <source>
        <tissue>Oocyte</tissue>
    </source>
</reference>
<reference key="2">
    <citation type="submission" date="2004-07" db="EMBL/GenBank/DDBJ databases">
        <authorList>
            <consortium name="NIH - Xenopus Gene Collection (XGC) project"/>
        </authorList>
    </citation>
    <scope>NUCLEOTIDE SEQUENCE [LARGE SCALE MRNA]</scope>
    <source>
        <tissue>Oocyte</tissue>
    </source>
</reference>
<keyword id="KW-0217">Developmental protein</keyword>
<keyword id="KW-1185">Reference proteome</keyword>
<protein>
    <recommendedName>
        <fullName>GSK-3-binding protein</fullName>
        <shortName>GBP</shortName>
    </recommendedName>
</protein>
<dbReference type="EMBL" id="AF062738">
    <property type="protein sequence ID" value="AAC41303.1"/>
    <property type="molecule type" value="mRNA"/>
</dbReference>
<dbReference type="EMBL" id="BC076771">
    <property type="protein sequence ID" value="AAH76771.1"/>
    <property type="molecule type" value="mRNA"/>
</dbReference>
<dbReference type="RefSeq" id="NP_001081774.1">
    <property type="nucleotide sequence ID" value="NM_001088305.1"/>
</dbReference>
<dbReference type="SMR" id="O93343"/>
<dbReference type="DNASU" id="398043"/>
<dbReference type="GeneID" id="398043"/>
<dbReference type="KEGG" id="xla:398043"/>
<dbReference type="AGR" id="Xenbase:XB-GENE-865735"/>
<dbReference type="CTD" id="398043"/>
<dbReference type="Xenbase" id="XB-GENE-865735">
    <property type="gene designation" value="frat1.S"/>
</dbReference>
<dbReference type="OrthoDB" id="6381246at2759"/>
<dbReference type="Proteomes" id="UP000186698">
    <property type="component" value="Chromosome 6S"/>
</dbReference>
<dbReference type="Bgee" id="398043">
    <property type="expression patterns" value="Expressed in egg cell and 19 other cell types or tissues"/>
</dbReference>
<dbReference type="GO" id="GO:0005737">
    <property type="term" value="C:cytoplasm"/>
    <property type="evidence" value="ECO:0000318"/>
    <property type="project" value="GO_Central"/>
</dbReference>
<dbReference type="GO" id="GO:0009950">
    <property type="term" value="P:dorsal/ventral axis specification"/>
    <property type="evidence" value="ECO:0000315"/>
    <property type="project" value="UniProtKB"/>
</dbReference>
<dbReference type="InterPro" id="IPR008014">
    <property type="entry name" value="GSK3-bd"/>
</dbReference>
<dbReference type="PANTHER" id="PTHR35154">
    <property type="entry name" value="GBP PROTEIN"/>
    <property type="match status" value="1"/>
</dbReference>
<dbReference type="PANTHER" id="PTHR35154:SF3">
    <property type="entry name" value="GBP PROTEIN"/>
    <property type="match status" value="1"/>
</dbReference>
<dbReference type="Pfam" id="PF05350">
    <property type="entry name" value="GSK-3_bind"/>
    <property type="match status" value="2"/>
</dbReference>
<organism>
    <name type="scientific">Xenopus laevis</name>
    <name type="common">African clawed frog</name>
    <dbReference type="NCBI Taxonomy" id="8355"/>
    <lineage>
        <taxon>Eukaryota</taxon>
        <taxon>Metazoa</taxon>
        <taxon>Chordata</taxon>
        <taxon>Craniata</taxon>
        <taxon>Vertebrata</taxon>
        <taxon>Euteleostomi</taxon>
        <taxon>Amphibia</taxon>
        <taxon>Batrachia</taxon>
        <taxon>Anura</taxon>
        <taxon>Pipoidea</taxon>
        <taxon>Pipidae</taxon>
        <taxon>Xenopodinae</taxon>
        <taxon>Xenopus</taxon>
        <taxon>Xenopus</taxon>
    </lineage>
</organism>
<name>GBP_XENLA</name>
<sequence length="169" mass="18385">MPCRKESFLLLEQSVTVGSGEVDTLVARIGEALQLNAQRTPTSCSMAYGALKPVSRAGPSCSCVRGRSTPYPVCTPRGAARHAQHHHHHSPRQQGTGGNKRLCGRGWGRCNCRKHAGTEEEDDPHELLQELLLSGNLIKEAVRRLHMAGESPDPPGSRRVSECTETTVQ</sequence>
<proteinExistence type="evidence at protein level"/>
<evidence type="ECO:0000256" key="1">
    <source>
        <dbReference type="SAM" id="MobiDB-lite"/>
    </source>
</evidence>
<evidence type="ECO:0000305" key="2"/>
<feature type="chain" id="PRO_0000087435" description="GSK-3-binding protein">
    <location>
        <begin position="1"/>
        <end position="169"/>
    </location>
</feature>
<feature type="region of interest" description="Disordered" evidence="1">
    <location>
        <begin position="75"/>
        <end position="100"/>
    </location>
</feature>
<feature type="region of interest" description="Involved in GSK-3 binding">
    <location>
        <begin position="122"/>
        <end position="145"/>
    </location>
</feature>
<feature type="region of interest" description="Disordered" evidence="1">
    <location>
        <begin position="147"/>
        <end position="169"/>
    </location>
</feature>
<feature type="compositionally biased region" description="Basic residues" evidence="1">
    <location>
        <begin position="79"/>
        <end position="91"/>
    </location>
</feature>
<feature type="mutagenesis site" description="Abolishes GSK-3 binding activity.">
    <original>KE</original>
    <variation>AQ</variation>
    <location>
        <begin position="139"/>
        <end position="140"/>
    </location>
</feature>
<accession>O93343</accession>
<accession>Q6DFG6</accession>
<comment type="function">
    <text>Binds GSK-3 and prevents GSK-3-dependent phosphorylation. Regulates the stability of beta-catenin in embryos. Maternal GBP is required for dorsal-ventral axis formation.</text>
</comment>
<comment type="developmental stage">
    <text>Expressed at constant levels in the oocyte and early embryo.</text>
</comment>
<comment type="similarity">
    <text evidence="2">Belongs to the GSK-3-binding protein family.</text>
</comment>
<gene>
    <name type="primary">gbp</name>
</gene>